<protein>
    <recommendedName>
        <fullName evidence="12">Large ribosomal subunit protein eL6</fullName>
    </recommendedName>
    <alternativeName>
        <fullName>60S ribosomal protein L6</fullName>
    </alternativeName>
    <alternativeName>
        <fullName>Neoplasm-related protein C140</fullName>
    </alternativeName>
    <alternativeName>
        <fullName>Tax-responsive enhancer element-binding protein 107</fullName>
        <shortName>TaxREB107</shortName>
    </alternativeName>
</protein>
<dbReference type="EMBL" id="X69391">
    <property type="protein sequence ID" value="CAA49188.1"/>
    <property type="molecule type" value="mRNA"/>
</dbReference>
<dbReference type="EMBL" id="D17554">
    <property type="protein sequence ID" value="BAA04491.1"/>
    <property type="molecule type" value="mRNA"/>
</dbReference>
<dbReference type="EMBL" id="AB042820">
    <property type="protein sequence ID" value="BAB17292.1"/>
    <property type="molecule type" value="Genomic_DNA"/>
</dbReference>
<dbReference type="EMBL" id="BC004138">
    <property type="protein sequence ID" value="AAH04138.1"/>
    <property type="molecule type" value="mRNA"/>
</dbReference>
<dbReference type="EMBL" id="BC020679">
    <property type="protein sequence ID" value="AAH20679.1"/>
    <property type="molecule type" value="mRNA"/>
</dbReference>
<dbReference type="EMBL" id="BC032299">
    <property type="protein sequence ID" value="AAH32299.1"/>
    <property type="molecule type" value="mRNA"/>
</dbReference>
<dbReference type="EMBL" id="BC071912">
    <property type="protein sequence ID" value="AAH71912.1"/>
    <property type="molecule type" value="mRNA"/>
</dbReference>
<dbReference type="EMBL" id="BC104824">
    <property type="protein sequence ID" value="AAI04825.1"/>
    <property type="molecule type" value="mRNA"/>
</dbReference>
<dbReference type="EMBL" id="BC104826">
    <property type="protein sequence ID" value="AAI04827.1"/>
    <property type="molecule type" value="mRNA"/>
</dbReference>
<dbReference type="EMBL" id="S71022">
    <property type="protein sequence ID" value="AAB30819.1"/>
    <property type="molecule type" value="mRNA"/>
</dbReference>
<dbReference type="CCDS" id="CCDS9162.1"/>
<dbReference type="PIR" id="I51803">
    <property type="entry name" value="I51803"/>
</dbReference>
<dbReference type="PIR" id="S33714">
    <property type="entry name" value="S33714"/>
</dbReference>
<dbReference type="RefSeq" id="NP_000961.2">
    <property type="nucleotide sequence ID" value="NM_000970.4"/>
</dbReference>
<dbReference type="RefSeq" id="NP_001019833.1">
    <property type="nucleotide sequence ID" value="NM_001024662.3"/>
</dbReference>
<dbReference type="RefSeq" id="NP_001307066.1">
    <property type="nucleotide sequence ID" value="NM_001320137.2"/>
</dbReference>
<dbReference type="RefSeq" id="NP_001307067.1">
    <property type="nucleotide sequence ID" value="NM_001320138.2"/>
</dbReference>
<dbReference type="RefSeq" id="NP_001307068.1">
    <property type="nucleotide sequence ID" value="NM_001320139.2"/>
</dbReference>
<dbReference type="RefSeq" id="NP_001307069.1">
    <property type="nucleotide sequence ID" value="NM_001320140.2"/>
</dbReference>
<dbReference type="RefSeq" id="NP_001307070.1">
    <property type="nucleotide sequence ID" value="NM_001320141.2"/>
</dbReference>
<dbReference type="RefSeq" id="XP_016875270.1">
    <property type="nucleotide sequence ID" value="XM_017019781.1"/>
</dbReference>
<dbReference type="RefSeq" id="XP_016875271.1">
    <property type="nucleotide sequence ID" value="XM_017019782.1"/>
</dbReference>
<dbReference type="RefSeq" id="XP_047285258.1">
    <property type="nucleotide sequence ID" value="XM_047429302.1"/>
</dbReference>
<dbReference type="RefSeq" id="XP_047285259.1">
    <property type="nucleotide sequence ID" value="XM_047429303.1"/>
</dbReference>
<dbReference type="RefSeq" id="XP_054228803.1">
    <property type="nucleotide sequence ID" value="XM_054372828.1"/>
</dbReference>
<dbReference type="RefSeq" id="XP_054228804.1">
    <property type="nucleotide sequence ID" value="XM_054372829.1"/>
</dbReference>
<dbReference type="RefSeq" id="XP_054228805.1">
    <property type="nucleotide sequence ID" value="XM_054372830.1"/>
</dbReference>
<dbReference type="PDB" id="4UG0">
    <property type="method" value="EM"/>
    <property type="chains" value="LE=1-288"/>
</dbReference>
<dbReference type="PDB" id="4V6X">
    <property type="method" value="EM"/>
    <property type="resolution" value="5.00 A"/>
    <property type="chains" value="CE=1-288"/>
</dbReference>
<dbReference type="PDB" id="5AJ0">
    <property type="method" value="EM"/>
    <property type="resolution" value="3.50 A"/>
    <property type="chains" value="AE=1-288"/>
</dbReference>
<dbReference type="PDB" id="5LKS">
    <property type="method" value="EM"/>
    <property type="resolution" value="3.60 A"/>
    <property type="chains" value="LE=1-288"/>
</dbReference>
<dbReference type="PDB" id="5T2C">
    <property type="method" value="EM"/>
    <property type="resolution" value="3.60 A"/>
    <property type="chains" value="H=1-288"/>
</dbReference>
<dbReference type="PDB" id="6IP5">
    <property type="method" value="EM"/>
    <property type="resolution" value="3.90 A"/>
    <property type="chains" value="1H=1-288"/>
</dbReference>
<dbReference type="PDB" id="6IP6">
    <property type="method" value="EM"/>
    <property type="resolution" value="4.50 A"/>
    <property type="chains" value="1H=1-288"/>
</dbReference>
<dbReference type="PDB" id="6IP8">
    <property type="method" value="EM"/>
    <property type="resolution" value="3.90 A"/>
    <property type="chains" value="1H=1-288"/>
</dbReference>
<dbReference type="PDB" id="6LQM">
    <property type="method" value="EM"/>
    <property type="resolution" value="3.09 A"/>
    <property type="chains" value="v=1-288"/>
</dbReference>
<dbReference type="PDB" id="6LSR">
    <property type="method" value="EM"/>
    <property type="resolution" value="3.13 A"/>
    <property type="chains" value="v=1-288"/>
</dbReference>
<dbReference type="PDB" id="6LSS">
    <property type="method" value="EM"/>
    <property type="resolution" value="3.23 A"/>
    <property type="chains" value="o=1-288"/>
</dbReference>
<dbReference type="PDB" id="6LU8">
    <property type="method" value="EM"/>
    <property type="resolution" value="3.13 A"/>
    <property type="chains" value="o=1-288"/>
</dbReference>
<dbReference type="PDB" id="6OLE">
    <property type="method" value="EM"/>
    <property type="resolution" value="3.10 A"/>
    <property type="chains" value="G=42-288"/>
</dbReference>
<dbReference type="PDB" id="6OLF">
    <property type="method" value="EM"/>
    <property type="resolution" value="3.90 A"/>
    <property type="chains" value="G=42-288"/>
</dbReference>
<dbReference type="PDB" id="6OLG">
    <property type="method" value="EM"/>
    <property type="resolution" value="3.40 A"/>
    <property type="chains" value="AE=95-288"/>
</dbReference>
<dbReference type="PDB" id="6OLI">
    <property type="method" value="EM"/>
    <property type="resolution" value="3.50 A"/>
    <property type="chains" value="G=42-288"/>
</dbReference>
<dbReference type="PDB" id="6OLZ">
    <property type="method" value="EM"/>
    <property type="resolution" value="3.90 A"/>
    <property type="chains" value="AE=42-288"/>
</dbReference>
<dbReference type="PDB" id="6OM0">
    <property type="method" value="EM"/>
    <property type="resolution" value="3.10 A"/>
    <property type="chains" value="G=42-288"/>
</dbReference>
<dbReference type="PDB" id="6OM7">
    <property type="method" value="EM"/>
    <property type="resolution" value="3.70 A"/>
    <property type="chains" value="G=42-288"/>
</dbReference>
<dbReference type="PDB" id="6QZP">
    <property type="method" value="EM"/>
    <property type="resolution" value="2.90 A"/>
    <property type="chains" value="LE=42-288"/>
</dbReference>
<dbReference type="PDB" id="6W6L">
    <property type="method" value="EM"/>
    <property type="resolution" value="3.84 A"/>
    <property type="chains" value="G=1-288"/>
</dbReference>
<dbReference type="PDB" id="6XA1">
    <property type="method" value="EM"/>
    <property type="resolution" value="2.80 A"/>
    <property type="chains" value="LE=42-288"/>
</dbReference>
<dbReference type="PDB" id="6Y0G">
    <property type="method" value="EM"/>
    <property type="resolution" value="3.20 A"/>
    <property type="chains" value="LE=1-288"/>
</dbReference>
<dbReference type="PDB" id="6Y2L">
    <property type="method" value="EM"/>
    <property type="resolution" value="3.00 A"/>
    <property type="chains" value="LE=1-288"/>
</dbReference>
<dbReference type="PDB" id="6Y57">
    <property type="method" value="EM"/>
    <property type="resolution" value="3.50 A"/>
    <property type="chains" value="LE=1-288"/>
</dbReference>
<dbReference type="PDB" id="6Y6X">
    <property type="method" value="EM"/>
    <property type="resolution" value="2.80 A"/>
    <property type="chains" value="LE=42-288"/>
</dbReference>
<dbReference type="PDB" id="6Z6L">
    <property type="method" value="EM"/>
    <property type="resolution" value="3.00 A"/>
    <property type="chains" value="LE=1-288"/>
</dbReference>
<dbReference type="PDB" id="6Z6M">
    <property type="method" value="EM"/>
    <property type="resolution" value="3.10 A"/>
    <property type="chains" value="LE=1-288"/>
</dbReference>
<dbReference type="PDB" id="6Z6N">
    <property type="method" value="EM"/>
    <property type="resolution" value="2.90 A"/>
    <property type="chains" value="LE=1-288"/>
</dbReference>
<dbReference type="PDB" id="6ZM7">
    <property type="method" value="EM"/>
    <property type="resolution" value="2.70 A"/>
    <property type="chains" value="LE=1-288"/>
</dbReference>
<dbReference type="PDB" id="6ZME">
    <property type="method" value="EM"/>
    <property type="resolution" value="3.00 A"/>
    <property type="chains" value="LE=1-288"/>
</dbReference>
<dbReference type="PDB" id="6ZMI">
    <property type="method" value="EM"/>
    <property type="resolution" value="2.60 A"/>
    <property type="chains" value="LE=1-288"/>
</dbReference>
<dbReference type="PDB" id="6ZMO">
    <property type="method" value="EM"/>
    <property type="resolution" value="3.10 A"/>
    <property type="chains" value="LE=1-288"/>
</dbReference>
<dbReference type="PDB" id="7BHP">
    <property type="method" value="EM"/>
    <property type="resolution" value="3.30 A"/>
    <property type="chains" value="LE=1-288"/>
</dbReference>
<dbReference type="PDB" id="7F5S">
    <property type="method" value="EM"/>
    <property type="resolution" value="2.72 A"/>
    <property type="chains" value="LE=1-288"/>
</dbReference>
<dbReference type="PDB" id="7OW7">
    <property type="method" value="EM"/>
    <property type="resolution" value="2.20 A"/>
    <property type="chains" value="H=1-288"/>
</dbReference>
<dbReference type="PDB" id="7QVP">
    <property type="method" value="EM"/>
    <property type="resolution" value="3.00 A"/>
    <property type="chains" value="LE/ME=1-288"/>
</dbReference>
<dbReference type="PDB" id="7XNX">
    <property type="method" value="EM"/>
    <property type="resolution" value="2.70 A"/>
    <property type="chains" value="LE=1-288"/>
</dbReference>
<dbReference type="PDB" id="7XNY">
    <property type="method" value="EM"/>
    <property type="resolution" value="2.50 A"/>
    <property type="chains" value="LE=1-288"/>
</dbReference>
<dbReference type="PDB" id="8A3D">
    <property type="method" value="EM"/>
    <property type="resolution" value="1.67 A"/>
    <property type="chains" value="H=1-288"/>
</dbReference>
<dbReference type="PDB" id="8FKP">
    <property type="method" value="EM"/>
    <property type="resolution" value="2.85 A"/>
    <property type="chains" value="SC=1-288"/>
</dbReference>
<dbReference type="PDB" id="8FKQ">
    <property type="method" value="EM"/>
    <property type="resolution" value="2.76 A"/>
    <property type="chains" value="SC=1-288"/>
</dbReference>
<dbReference type="PDB" id="8FKR">
    <property type="method" value="EM"/>
    <property type="resolution" value="2.89 A"/>
    <property type="chains" value="SC=1-288"/>
</dbReference>
<dbReference type="PDB" id="8FKS">
    <property type="method" value="EM"/>
    <property type="resolution" value="2.88 A"/>
    <property type="chains" value="SC=1-288"/>
</dbReference>
<dbReference type="PDB" id="8FKT">
    <property type="method" value="EM"/>
    <property type="resolution" value="2.81 A"/>
    <property type="chains" value="SC=1-288"/>
</dbReference>
<dbReference type="PDB" id="8FKU">
    <property type="method" value="EM"/>
    <property type="resolution" value="2.82 A"/>
    <property type="chains" value="SC=1-288"/>
</dbReference>
<dbReference type="PDB" id="8FKV">
    <property type="method" value="EM"/>
    <property type="resolution" value="2.47 A"/>
    <property type="chains" value="SC=1-288"/>
</dbReference>
<dbReference type="PDB" id="8FKW">
    <property type="method" value="EM"/>
    <property type="resolution" value="2.50 A"/>
    <property type="chains" value="SC=1-288"/>
</dbReference>
<dbReference type="PDB" id="8FKX">
    <property type="method" value="EM"/>
    <property type="resolution" value="2.59 A"/>
    <property type="chains" value="SC=1-288"/>
</dbReference>
<dbReference type="PDB" id="8FKY">
    <property type="method" value="EM"/>
    <property type="resolution" value="2.67 A"/>
    <property type="chains" value="SC=1-288"/>
</dbReference>
<dbReference type="PDB" id="8FKZ">
    <property type="method" value="EM"/>
    <property type="resolution" value="3.04 A"/>
    <property type="chains" value="SC=1-288"/>
</dbReference>
<dbReference type="PDB" id="8FL0">
    <property type="method" value="EM"/>
    <property type="resolution" value="2.91 A"/>
    <property type="chains" value="SC=1-288"/>
</dbReference>
<dbReference type="PDB" id="8FL2">
    <property type="method" value="EM"/>
    <property type="resolution" value="2.67 A"/>
    <property type="chains" value="SC=1-288"/>
</dbReference>
<dbReference type="PDB" id="8FL3">
    <property type="method" value="EM"/>
    <property type="resolution" value="2.53 A"/>
    <property type="chains" value="SC=1-288"/>
</dbReference>
<dbReference type="PDB" id="8FL4">
    <property type="method" value="EM"/>
    <property type="resolution" value="2.89 A"/>
    <property type="chains" value="SC=1-288"/>
</dbReference>
<dbReference type="PDB" id="8FL6">
    <property type="method" value="EM"/>
    <property type="resolution" value="2.62 A"/>
    <property type="chains" value="SC=1-288"/>
</dbReference>
<dbReference type="PDB" id="8FL7">
    <property type="method" value="EM"/>
    <property type="resolution" value="2.55 A"/>
    <property type="chains" value="SC=1-288"/>
</dbReference>
<dbReference type="PDB" id="8FL9">
    <property type="method" value="EM"/>
    <property type="resolution" value="2.75 A"/>
    <property type="chains" value="SC=1-288"/>
</dbReference>
<dbReference type="PDB" id="8FLA">
    <property type="method" value="EM"/>
    <property type="resolution" value="2.63 A"/>
    <property type="chains" value="SC=1-288"/>
</dbReference>
<dbReference type="PDB" id="8FLB">
    <property type="method" value="EM"/>
    <property type="resolution" value="2.55 A"/>
    <property type="chains" value="SC=1-288"/>
</dbReference>
<dbReference type="PDB" id="8FLC">
    <property type="method" value="EM"/>
    <property type="resolution" value="2.76 A"/>
    <property type="chains" value="SC=1-288"/>
</dbReference>
<dbReference type="PDB" id="8FLD">
    <property type="method" value="EM"/>
    <property type="resolution" value="2.58 A"/>
    <property type="chains" value="SC=1-288"/>
</dbReference>
<dbReference type="PDB" id="8FLE">
    <property type="method" value="EM"/>
    <property type="resolution" value="2.48 A"/>
    <property type="chains" value="SC=1-288"/>
</dbReference>
<dbReference type="PDB" id="8FLF">
    <property type="method" value="EM"/>
    <property type="resolution" value="2.65 A"/>
    <property type="chains" value="SC=1-288"/>
</dbReference>
<dbReference type="PDB" id="8G5Y">
    <property type="method" value="EM"/>
    <property type="resolution" value="2.29 A"/>
    <property type="chains" value="LE=1-288"/>
</dbReference>
<dbReference type="PDB" id="8G60">
    <property type="method" value="EM"/>
    <property type="resolution" value="2.54 A"/>
    <property type="chains" value="LE=1-288"/>
</dbReference>
<dbReference type="PDB" id="8G61">
    <property type="method" value="EM"/>
    <property type="resolution" value="2.94 A"/>
    <property type="chains" value="LE=1-288"/>
</dbReference>
<dbReference type="PDB" id="8G6J">
    <property type="method" value="EM"/>
    <property type="resolution" value="2.80 A"/>
    <property type="chains" value="LE=1-288"/>
</dbReference>
<dbReference type="PDB" id="8GLP">
    <property type="method" value="EM"/>
    <property type="resolution" value="1.67 A"/>
    <property type="chains" value="LE=1-288"/>
</dbReference>
<dbReference type="PDB" id="8IDT">
    <property type="method" value="EM"/>
    <property type="resolution" value="2.80 A"/>
    <property type="chains" value="o=1-288"/>
</dbReference>
<dbReference type="PDB" id="8IDY">
    <property type="method" value="EM"/>
    <property type="resolution" value="3.00 A"/>
    <property type="chains" value="o=1-288"/>
</dbReference>
<dbReference type="PDB" id="8IE3">
    <property type="method" value="EM"/>
    <property type="resolution" value="3.30 A"/>
    <property type="chains" value="o=1-288"/>
</dbReference>
<dbReference type="PDB" id="8IFD">
    <property type="method" value="EM"/>
    <property type="resolution" value="2.59 A"/>
    <property type="chains" value="1H=1-288"/>
</dbReference>
<dbReference type="PDB" id="8IFE">
    <property type="method" value="EM"/>
    <property type="resolution" value="2.57 A"/>
    <property type="chains" value="1H=1-288"/>
</dbReference>
<dbReference type="PDB" id="8INE">
    <property type="method" value="EM"/>
    <property type="resolution" value="3.20 A"/>
    <property type="chains" value="o=1-288"/>
</dbReference>
<dbReference type="PDB" id="8INF">
    <property type="method" value="EM"/>
    <property type="resolution" value="3.00 A"/>
    <property type="chains" value="o=1-288"/>
</dbReference>
<dbReference type="PDB" id="8INK">
    <property type="method" value="EM"/>
    <property type="resolution" value="3.20 A"/>
    <property type="chains" value="o=1-288"/>
</dbReference>
<dbReference type="PDB" id="8IPD">
    <property type="method" value="EM"/>
    <property type="resolution" value="3.20 A"/>
    <property type="chains" value="o=1-288"/>
</dbReference>
<dbReference type="PDB" id="8IPX">
    <property type="method" value="EM"/>
    <property type="resolution" value="4.30 A"/>
    <property type="chains" value="o=1-288"/>
</dbReference>
<dbReference type="PDB" id="8IPY">
    <property type="method" value="EM"/>
    <property type="resolution" value="3.20 A"/>
    <property type="chains" value="o=1-288"/>
</dbReference>
<dbReference type="PDB" id="8IR1">
    <property type="method" value="EM"/>
    <property type="resolution" value="3.30 A"/>
    <property type="chains" value="o=1-288"/>
</dbReference>
<dbReference type="PDB" id="8IR3">
    <property type="method" value="EM"/>
    <property type="resolution" value="3.50 A"/>
    <property type="chains" value="o=1-288"/>
</dbReference>
<dbReference type="PDB" id="8JDJ">
    <property type="method" value="EM"/>
    <property type="resolution" value="2.50 A"/>
    <property type="chains" value="K=1-288"/>
</dbReference>
<dbReference type="PDB" id="8JDK">
    <property type="method" value="EM"/>
    <property type="resolution" value="2.26 A"/>
    <property type="chains" value="K=1-288"/>
</dbReference>
<dbReference type="PDB" id="8JDL">
    <property type="method" value="EM"/>
    <property type="resolution" value="2.42 A"/>
    <property type="chains" value="K=1-288"/>
</dbReference>
<dbReference type="PDB" id="8JDM">
    <property type="method" value="EM"/>
    <property type="resolution" value="2.67 A"/>
    <property type="chains" value="K=1-288"/>
</dbReference>
<dbReference type="PDB" id="8K2C">
    <property type="method" value="EM"/>
    <property type="resolution" value="2.40 A"/>
    <property type="chains" value="LE=1-288"/>
</dbReference>
<dbReference type="PDB" id="8OHD">
    <property type="method" value="EM"/>
    <property type="resolution" value="3.10 A"/>
    <property type="chains" value="LE=1-288"/>
</dbReference>
<dbReference type="PDB" id="8OJ0">
    <property type="method" value="EM"/>
    <property type="resolution" value="3.30 A"/>
    <property type="chains" value="LE=1-288"/>
</dbReference>
<dbReference type="PDB" id="8OJ5">
    <property type="method" value="EM"/>
    <property type="resolution" value="2.90 A"/>
    <property type="chains" value="LE=1-288"/>
</dbReference>
<dbReference type="PDB" id="8OJ8">
    <property type="method" value="EM"/>
    <property type="resolution" value="3.30 A"/>
    <property type="chains" value="LE=1-288"/>
</dbReference>
<dbReference type="PDB" id="8QFD">
    <property type="method" value="EM"/>
    <property type="resolution" value="2.20 A"/>
    <property type="chains" value="E=1-288"/>
</dbReference>
<dbReference type="PDB" id="8QOI">
    <property type="method" value="EM"/>
    <property type="resolution" value="1.90 A"/>
    <property type="chains" value="LE=42-288"/>
</dbReference>
<dbReference type="PDB" id="8QYX">
    <property type="method" value="EM"/>
    <property type="resolution" value="1.78 A"/>
    <property type="chains" value="H2=1-288"/>
</dbReference>
<dbReference type="PDB" id="8RL2">
    <property type="method" value="EM"/>
    <property type="resolution" value="2.84 A"/>
    <property type="chains" value="LE=1-288"/>
</dbReference>
<dbReference type="PDB" id="8UKB">
    <property type="method" value="EM"/>
    <property type="resolution" value="3.05 A"/>
    <property type="chains" value="LE=42-288"/>
</dbReference>
<dbReference type="PDB" id="8XSX">
    <property type="method" value="EM"/>
    <property type="resolution" value="2.40 A"/>
    <property type="chains" value="LE=1-288"/>
</dbReference>
<dbReference type="PDB" id="8XSY">
    <property type="method" value="EM"/>
    <property type="resolution" value="3.00 A"/>
    <property type="chains" value="LE=1-288"/>
</dbReference>
<dbReference type="PDB" id="8XSZ">
    <property type="method" value="EM"/>
    <property type="resolution" value="3.20 A"/>
    <property type="chains" value="LE=1-288"/>
</dbReference>
<dbReference type="PDB" id="8Y0W">
    <property type="method" value="EM"/>
    <property type="resolution" value="3.40 A"/>
    <property type="chains" value="LE=1-288"/>
</dbReference>
<dbReference type="PDB" id="8Y0X">
    <property type="method" value="EM"/>
    <property type="resolution" value="3.30 A"/>
    <property type="chains" value="LE=1-288"/>
</dbReference>
<dbReference type="PDB" id="8YOO">
    <property type="method" value="EM"/>
    <property type="resolution" value="2.00 A"/>
    <property type="chains" value="LE=1-288"/>
</dbReference>
<dbReference type="PDB" id="8YOP">
    <property type="method" value="EM"/>
    <property type="resolution" value="2.20 A"/>
    <property type="chains" value="LE=1-288"/>
</dbReference>
<dbReference type="PDB" id="9C3H">
    <property type="method" value="EM"/>
    <property type="resolution" value="2.00 A"/>
    <property type="chains" value="LK=1-288"/>
</dbReference>
<dbReference type="PDB" id="9FPZ">
    <property type="method" value="EM"/>
    <property type="resolution" value="2.69 A"/>
    <property type="chains" value="LE=1-288"/>
</dbReference>
<dbReference type="PDB" id="9FQ0">
    <property type="method" value="EM"/>
    <property type="resolution" value="4.67 A"/>
    <property type="chains" value="LE=1-288"/>
</dbReference>
<dbReference type="PDB" id="9G8M">
    <property type="method" value="EM"/>
    <property type="resolution" value="3.30 A"/>
    <property type="chains" value="LE=1-288"/>
</dbReference>
<dbReference type="PDB" id="9GMO">
    <property type="method" value="EM"/>
    <property type="resolution" value="2.59 A"/>
    <property type="chains" value="H=1-288"/>
</dbReference>
<dbReference type="PDBsum" id="4UG0"/>
<dbReference type="PDBsum" id="4V6X"/>
<dbReference type="PDBsum" id="5AJ0"/>
<dbReference type="PDBsum" id="5LKS"/>
<dbReference type="PDBsum" id="5T2C"/>
<dbReference type="PDBsum" id="6IP5"/>
<dbReference type="PDBsum" id="6IP6"/>
<dbReference type="PDBsum" id="6IP8"/>
<dbReference type="PDBsum" id="6LQM"/>
<dbReference type="PDBsum" id="6LSR"/>
<dbReference type="PDBsum" id="6LSS"/>
<dbReference type="PDBsum" id="6LU8"/>
<dbReference type="PDBsum" id="6OLE"/>
<dbReference type="PDBsum" id="6OLF"/>
<dbReference type="PDBsum" id="6OLG"/>
<dbReference type="PDBsum" id="6OLI"/>
<dbReference type="PDBsum" id="6OLZ"/>
<dbReference type="PDBsum" id="6OM0"/>
<dbReference type="PDBsum" id="6OM7"/>
<dbReference type="PDBsum" id="6QZP"/>
<dbReference type="PDBsum" id="6W6L"/>
<dbReference type="PDBsum" id="6XA1"/>
<dbReference type="PDBsum" id="6Y0G"/>
<dbReference type="PDBsum" id="6Y2L"/>
<dbReference type="PDBsum" id="6Y57"/>
<dbReference type="PDBsum" id="6Y6X"/>
<dbReference type="PDBsum" id="6Z6L"/>
<dbReference type="PDBsum" id="6Z6M"/>
<dbReference type="PDBsum" id="6Z6N"/>
<dbReference type="PDBsum" id="6ZM7"/>
<dbReference type="PDBsum" id="6ZME"/>
<dbReference type="PDBsum" id="6ZMI"/>
<dbReference type="PDBsum" id="6ZMO"/>
<dbReference type="PDBsum" id="7BHP"/>
<dbReference type="PDBsum" id="7F5S"/>
<dbReference type="PDBsum" id="7OW7"/>
<dbReference type="PDBsum" id="7QVP"/>
<dbReference type="PDBsum" id="7XNX"/>
<dbReference type="PDBsum" id="7XNY"/>
<dbReference type="PDBsum" id="8A3D"/>
<dbReference type="PDBsum" id="8FKP"/>
<dbReference type="PDBsum" id="8FKQ"/>
<dbReference type="PDBsum" id="8FKR"/>
<dbReference type="PDBsum" id="8FKS"/>
<dbReference type="PDBsum" id="8FKT"/>
<dbReference type="PDBsum" id="8FKU"/>
<dbReference type="PDBsum" id="8FKV"/>
<dbReference type="PDBsum" id="8FKW"/>
<dbReference type="PDBsum" id="8FKX"/>
<dbReference type="PDBsum" id="8FKY"/>
<dbReference type="PDBsum" id="8FKZ"/>
<dbReference type="PDBsum" id="8FL0"/>
<dbReference type="PDBsum" id="8FL2"/>
<dbReference type="PDBsum" id="8FL3"/>
<dbReference type="PDBsum" id="8FL4"/>
<dbReference type="PDBsum" id="8FL6"/>
<dbReference type="PDBsum" id="8FL7"/>
<dbReference type="PDBsum" id="8FL9"/>
<dbReference type="PDBsum" id="8FLA"/>
<dbReference type="PDBsum" id="8FLB"/>
<dbReference type="PDBsum" id="8FLC"/>
<dbReference type="PDBsum" id="8FLD"/>
<dbReference type="PDBsum" id="8FLE"/>
<dbReference type="PDBsum" id="8FLF"/>
<dbReference type="PDBsum" id="8G5Y"/>
<dbReference type="PDBsum" id="8G60"/>
<dbReference type="PDBsum" id="8G61"/>
<dbReference type="PDBsum" id="8G6J"/>
<dbReference type="PDBsum" id="8GLP"/>
<dbReference type="PDBsum" id="8IDT"/>
<dbReference type="PDBsum" id="8IDY"/>
<dbReference type="PDBsum" id="8IE3"/>
<dbReference type="PDBsum" id="8IFD"/>
<dbReference type="PDBsum" id="8IFE"/>
<dbReference type="PDBsum" id="8INE"/>
<dbReference type="PDBsum" id="8INF"/>
<dbReference type="PDBsum" id="8INK"/>
<dbReference type="PDBsum" id="8IPD"/>
<dbReference type="PDBsum" id="8IPX"/>
<dbReference type="PDBsum" id="8IPY"/>
<dbReference type="PDBsum" id="8IR1"/>
<dbReference type="PDBsum" id="8IR3"/>
<dbReference type="PDBsum" id="8JDJ"/>
<dbReference type="PDBsum" id="8JDK"/>
<dbReference type="PDBsum" id="8JDL"/>
<dbReference type="PDBsum" id="8JDM"/>
<dbReference type="PDBsum" id="8K2C"/>
<dbReference type="PDBsum" id="8OHD"/>
<dbReference type="PDBsum" id="8OJ0"/>
<dbReference type="PDBsum" id="8OJ5"/>
<dbReference type="PDBsum" id="8OJ8"/>
<dbReference type="PDBsum" id="8QFD"/>
<dbReference type="PDBsum" id="8QOI"/>
<dbReference type="PDBsum" id="8QYX"/>
<dbReference type="PDBsum" id="8RL2"/>
<dbReference type="PDBsum" id="8UKB"/>
<dbReference type="PDBsum" id="8XSX"/>
<dbReference type="PDBsum" id="8XSY"/>
<dbReference type="PDBsum" id="8XSZ"/>
<dbReference type="PDBsum" id="8Y0W"/>
<dbReference type="PDBsum" id="8Y0X"/>
<dbReference type="PDBsum" id="8YOO"/>
<dbReference type="PDBsum" id="8YOP"/>
<dbReference type="PDBsum" id="9C3H"/>
<dbReference type="PDBsum" id="9FPZ"/>
<dbReference type="PDBsum" id="9FQ0"/>
<dbReference type="PDBsum" id="9G8M"/>
<dbReference type="PDBsum" id="9GMO"/>
<dbReference type="EMDB" id="EMD-0948"/>
<dbReference type="EMDB" id="EMD-0963"/>
<dbReference type="EMDB" id="EMD-0964"/>
<dbReference type="EMDB" id="EMD-0978"/>
<dbReference type="EMDB" id="EMD-10668"/>
<dbReference type="EMDB" id="EMD-10674"/>
<dbReference type="EMDB" id="EMD-10690"/>
<dbReference type="EMDB" id="EMD-10709"/>
<dbReference type="EMDB" id="EMD-11098"/>
<dbReference type="EMDB" id="EMD-11099"/>
<dbReference type="EMDB" id="EMD-11100"/>
<dbReference type="EMDB" id="EMD-11288"/>
<dbReference type="EMDB" id="EMD-11289"/>
<dbReference type="EMDB" id="EMD-11292"/>
<dbReference type="EMDB" id="EMD-11299"/>
<dbReference type="EMDB" id="EMD-12189"/>
<dbReference type="EMDB" id="EMD-13094"/>
<dbReference type="EMDB" id="EMD-14181"/>
<dbReference type="EMDB" id="EMD-15113"/>
<dbReference type="EMDB" id="EMD-16880"/>
<dbReference type="EMDB" id="EMD-16902"/>
<dbReference type="EMDB" id="EMD-16905"/>
<dbReference type="EMDB" id="EMD-16908"/>
<dbReference type="EMDB" id="EMD-18382"/>
<dbReference type="EMDB" id="EMD-18539"/>
<dbReference type="EMDB" id="EMD-18765"/>
<dbReference type="EMDB" id="EMD-19330"/>
<dbReference type="EMDB" id="EMD-29252"/>
<dbReference type="EMDB" id="EMD-29253"/>
<dbReference type="EMDB" id="EMD-29254"/>
<dbReference type="EMDB" id="EMD-29255"/>
<dbReference type="EMDB" id="EMD-29256"/>
<dbReference type="EMDB" id="EMD-29257"/>
<dbReference type="EMDB" id="EMD-29258"/>
<dbReference type="EMDB" id="EMD-29259"/>
<dbReference type="EMDB" id="EMD-29260"/>
<dbReference type="EMDB" id="EMD-29261"/>
<dbReference type="EMDB" id="EMD-29262"/>
<dbReference type="EMDB" id="EMD-29263"/>
<dbReference type="EMDB" id="EMD-29265"/>
<dbReference type="EMDB" id="EMD-29266"/>
<dbReference type="EMDB" id="EMD-29267"/>
<dbReference type="EMDB" id="EMD-29268"/>
<dbReference type="EMDB" id="EMD-29269"/>
<dbReference type="EMDB" id="EMD-29271"/>
<dbReference type="EMDB" id="EMD-29272"/>
<dbReference type="EMDB" id="EMD-29273"/>
<dbReference type="EMDB" id="EMD-29274"/>
<dbReference type="EMDB" id="EMD-29275"/>
<dbReference type="EMDB" id="EMD-29276"/>
<dbReference type="EMDB" id="EMD-29277"/>
<dbReference type="EMDB" id="EMD-29757"/>
<dbReference type="EMDB" id="EMD-29758"/>
<dbReference type="EMDB" id="EMD-29759"/>
<dbReference type="EMDB" id="EMD-29760"/>
<dbReference type="EMDB" id="EMD-29771"/>
<dbReference type="EMDB" id="EMD-31465"/>
<dbReference type="EMDB" id="EMD-33329"/>
<dbReference type="EMDB" id="EMD-33330"/>
<dbReference type="EMDB" id="EMD-35370"/>
<dbReference type="EMDB" id="EMD-35371"/>
<dbReference type="EMDB" id="EMD-35375"/>
<dbReference type="EMDB" id="EMD-35413"/>
<dbReference type="EMDB" id="EMD-35414"/>
<dbReference type="EMDB" id="EMD-35596"/>
<dbReference type="EMDB" id="EMD-35597"/>
<dbReference type="EMDB" id="EMD-35599"/>
<dbReference type="EMDB" id="EMD-35639"/>
<dbReference type="EMDB" id="EMD-35649"/>
<dbReference type="EMDB" id="EMD-35651"/>
<dbReference type="EMDB" id="EMD-35672"/>
<dbReference type="EMDB" id="EMD-35673"/>
<dbReference type="EMDB" id="EMD-36178"/>
<dbReference type="EMDB" id="EMD-36179"/>
<dbReference type="EMDB" id="EMD-36180"/>
<dbReference type="EMDB" id="EMD-36181"/>
<dbReference type="EMDB" id="EMD-36838"/>
<dbReference type="EMDB" id="EMD-38629"/>
<dbReference type="EMDB" id="EMD-38630"/>
<dbReference type="EMDB" id="EMD-38631"/>
<dbReference type="EMDB" id="EMD-3883"/>
<dbReference type="EMDB" id="EMD-39455"/>
<dbReference type="EMDB" id="EMD-39456"/>
<dbReference type="EMDB" id="EMD-40205"/>
<dbReference type="EMDB" id="EMD-4070"/>
<dbReference type="EMDB" id="EMD-42351"/>
<dbReference type="EMDB" id="EMD-45170"/>
<dbReference type="EMDB" id="EMD-50641"/>
<dbReference type="EMDB" id="EMD-50642"/>
<dbReference type="EMDB" id="EMD-51132"/>
<dbReference type="EMDB" id="EMD-51452"/>
<dbReference type="EMDB" id="EMD-9701"/>
<dbReference type="EMDB" id="EMD-9702"/>
<dbReference type="EMDB" id="EMD-9703"/>
<dbReference type="SMR" id="Q02878"/>
<dbReference type="BioGRID" id="112048">
    <property type="interactions" value="633"/>
</dbReference>
<dbReference type="ComplexPortal" id="CPX-5183">
    <property type="entry name" value="60S cytosolic large ribosomal subunit"/>
</dbReference>
<dbReference type="ComplexPortal" id="CPX-7664">
    <property type="entry name" value="60S cytosolic large ribosomal subunit, testis-specific variant"/>
</dbReference>
<dbReference type="ComplexPortal" id="CPX-7665">
    <property type="entry name" value="60S cytosolic large ribosomal subunit, striated muscle variant"/>
</dbReference>
<dbReference type="CORUM" id="Q02878"/>
<dbReference type="DIP" id="DIP-27547N"/>
<dbReference type="FunCoup" id="Q02878">
    <property type="interactions" value="2658"/>
</dbReference>
<dbReference type="IntAct" id="Q02878">
    <property type="interactions" value="226"/>
</dbReference>
<dbReference type="MINT" id="Q02878"/>
<dbReference type="STRING" id="9606.ENSP00000403172"/>
<dbReference type="GlyGen" id="Q02878">
    <property type="glycosylation" value="2 sites, 1 O-linked glycan (1 site)"/>
</dbReference>
<dbReference type="iPTMnet" id="Q02878"/>
<dbReference type="PhosphoSitePlus" id="Q02878"/>
<dbReference type="SwissPalm" id="Q02878"/>
<dbReference type="BioMuta" id="RPL6"/>
<dbReference type="jPOST" id="Q02878"/>
<dbReference type="MassIVE" id="Q02878"/>
<dbReference type="PaxDb" id="9606-ENSP00000403172"/>
<dbReference type="PeptideAtlas" id="Q02878"/>
<dbReference type="ProteomicsDB" id="58132"/>
<dbReference type="Pumba" id="Q02878"/>
<dbReference type="TopDownProteomics" id="Q02878"/>
<dbReference type="Antibodypedia" id="31186">
    <property type="antibodies" value="118 antibodies from 26 providers"/>
</dbReference>
<dbReference type="DNASU" id="6128"/>
<dbReference type="Ensembl" id="ENST00000202773.14">
    <property type="protein sequence ID" value="ENSP00000202773.9"/>
    <property type="gene ID" value="ENSG00000089009.16"/>
</dbReference>
<dbReference type="Ensembl" id="ENST00000424576.6">
    <property type="protein sequence ID" value="ENSP00000403172.2"/>
    <property type="gene ID" value="ENSG00000089009.16"/>
</dbReference>
<dbReference type="GeneID" id="6128"/>
<dbReference type="KEGG" id="hsa:6128"/>
<dbReference type="MANE-Select" id="ENST00000202773.14">
    <property type="protein sequence ID" value="ENSP00000202773.9"/>
    <property type="RefSeq nucleotide sequence ID" value="NM_000970.6"/>
    <property type="RefSeq protein sequence ID" value="NP_000961.2"/>
</dbReference>
<dbReference type="UCSC" id="uc001ttu.4">
    <property type="organism name" value="human"/>
</dbReference>
<dbReference type="AGR" id="HGNC:10362"/>
<dbReference type="CTD" id="6128"/>
<dbReference type="DisGeNET" id="6128"/>
<dbReference type="GeneCards" id="RPL6"/>
<dbReference type="HGNC" id="HGNC:10362">
    <property type="gene designation" value="RPL6"/>
</dbReference>
<dbReference type="HPA" id="ENSG00000089009">
    <property type="expression patterns" value="Low tissue specificity"/>
</dbReference>
<dbReference type="MalaCards" id="RPL6"/>
<dbReference type="MIM" id="603703">
    <property type="type" value="gene"/>
</dbReference>
<dbReference type="neXtProt" id="NX_Q02878"/>
<dbReference type="OpenTargets" id="ENSG00000089009"/>
<dbReference type="PharmGKB" id="PA34758"/>
<dbReference type="VEuPathDB" id="HostDB:ENSG00000089009"/>
<dbReference type="eggNOG" id="KOG1694">
    <property type="taxonomic scope" value="Eukaryota"/>
</dbReference>
<dbReference type="GeneTree" id="ENSGT00390000003682"/>
<dbReference type="HOGENOM" id="CLU_066767_0_1_1"/>
<dbReference type="InParanoid" id="Q02878"/>
<dbReference type="OMA" id="KWYNADD"/>
<dbReference type="OrthoDB" id="9535314at2759"/>
<dbReference type="PAN-GO" id="Q02878">
    <property type="GO annotations" value="5 GO annotations based on evolutionary models"/>
</dbReference>
<dbReference type="PhylomeDB" id="Q02878"/>
<dbReference type="TreeFam" id="TF300115"/>
<dbReference type="PathwayCommons" id="Q02878"/>
<dbReference type="Reactome" id="R-HSA-156827">
    <property type="pathway name" value="L13a-mediated translational silencing of Ceruloplasmin expression"/>
</dbReference>
<dbReference type="Reactome" id="R-HSA-156902">
    <property type="pathway name" value="Peptide chain elongation"/>
</dbReference>
<dbReference type="Reactome" id="R-HSA-1799339">
    <property type="pathway name" value="SRP-dependent cotranslational protein targeting to membrane"/>
</dbReference>
<dbReference type="Reactome" id="R-HSA-192823">
    <property type="pathway name" value="Viral mRNA Translation"/>
</dbReference>
<dbReference type="Reactome" id="R-HSA-2408557">
    <property type="pathway name" value="Selenocysteine synthesis"/>
</dbReference>
<dbReference type="Reactome" id="R-HSA-6791226">
    <property type="pathway name" value="Major pathway of rRNA processing in the nucleolus and cytosol"/>
</dbReference>
<dbReference type="Reactome" id="R-HSA-72689">
    <property type="pathway name" value="Formation of a pool of free 40S subunits"/>
</dbReference>
<dbReference type="Reactome" id="R-HSA-72706">
    <property type="pathway name" value="GTP hydrolysis and joining of the 60S ribosomal subunit"/>
</dbReference>
<dbReference type="Reactome" id="R-HSA-72764">
    <property type="pathway name" value="Eukaryotic Translation Termination"/>
</dbReference>
<dbReference type="Reactome" id="R-HSA-9010553">
    <property type="pathway name" value="Regulation of expression of SLITs and ROBOs"/>
</dbReference>
<dbReference type="Reactome" id="R-HSA-9633012">
    <property type="pathway name" value="Response of EIF2AK4 (GCN2) to amino acid deficiency"/>
</dbReference>
<dbReference type="Reactome" id="R-HSA-975956">
    <property type="pathway name" value="Nonsense Mediated Decay (NMD) independent of the Exon Junction Complex (EJC)"/>
</dbReference>
<dbReference type="Reactome" id="R-HSA-975957">
    <property type="pathway name" value="Nonsense Mediated Decay (NMD) enhanced by the Exon Junction Complex (EJC)"/>
</dbReference>
<dbReference type="SignaLink" id="Q02878"/>
<dbReference type="SIGNOR" id="Q02878"/>
<dbReference type="BioGRID-ORCS" id="6128">
    <property type="hits" value="806 hits in 1089 CRISPR screens"/>
</dbReference>
<dbReference type="CD-CODE" id="91857CE7">
    <property type="entry name" value="Nucleolus"/>
</dbReference>
<dbReference type="CD-CODE" id="FB4E32DD">
    <property type="entry name" value="Presynaptic clusters and postsynaptic densities"/>
</dbReference>
<dbReference type="ChiTaRS" id="RPL6">
    <property type="organism name" value="human"/>
</dbReference>
<dbReference type="GeneWiki" id="RPL6"/>
<dbReference type="GenomeRNAi" id="6128"/>
<dbReference type="Pharos" id="Q02878">
    <property type="development level" value="Tbio"/>
</dbReference>
<dbReference type="PRO" id="PR:Q02878"/>
<dbReference type="Proteomes" id="UP000005640">
    <property type="component" value="Chromosome 12"/>
</dbReference>
<dbReference type="RNAct" id="Q02878">
    <property type="molecule type" value="protein"/>
</dbReference>
<dbReference type="Bgee" id="ENSG00000089009">
    <property type="expression patterns" value="Expressed in cortical plate and 109 other cell types or tissues"/>
</dbReference>
<dbReference type="ExpressionAtlas" id="Q02878">
    <property type="expression patterns" value="baseline and differential"/>
</dbReference>
<dbReference type="GO" id="GO:0005737">
    <property type="term" value="C:cytoplasm"/>
    <property type="evidence" value="ECO:0000303"/>
    <property type="project" value="ComplexPortal"/>
</dbReference>
<dbReference type="GO" id="GO:0036464">
    <property type="term" value="C:cytoplasmic ribonucleoprotein granule"/>
    <property type="evidence" value="ECO:0000314"/>
    <property type="project" value="ParkinsonsUK-UCL"/>
</dbReference>
<dbReference type="GO" id="GO:0005829">
    <property type="term" value="C:cytosol"/>
    <property type="evidence" value="ECO:0000304"/>
    <property type="project" value="Reactome"/>
</dbReference>
<dbReference type="GO" id="GO:0022625">
    <property type="term" value="C:cytosolic large ribosomal subunit"/>
    <property type="evidence" value="ECO:0000314"/>
    <property type="project" value="UniProtKB"/>
</dbReference>
<dbReference type="GO" id="GO:0022626">
    <property type="term" value="C:cytosolic ribosome"/>
    <property type="evidence" value="ECO:0000314"/>
    <property type="project" value="FlyBase"/>
</dbReference>
<dbReference type="GO" id="GO:0005925">
    <property type="term" value="C:focal adhesion"/>
    <property type="evidence" value="ECO:0007005"/>
    <property type="project" value="UniProtKB"/>
</dbReference>
<dbReference type="GO" id="GO:0016020">
    <property type="term" value="C:membrane"/>
    <property type="evidence" value="ECO:0007005"/>
    <property type="project" value="UniProtKB"/>
</dbReference>
<dbReference type="GO" id="GO:0005634">
    <property type="term" value="C:nucleus"/>
    <property type="evidence" value="ECO:0000314"/>
    <property type="project" value="BHF-UCL"/>
</dbReference>
<dbReference type="GO" id="GO:0014069">
    <property type="term" value="C:postsynaptic density"/>
    <property type="evidence" value="ECO:0007669"/>
    <property type="project" value="Ensembl"/>
</dbReference>
<dbReference type="GO" id="GO:0005791">
    <property type="term" value="C:rough endoplasmic reticulum"/>
    <property type="evidence" value="ECO:0007669"/>
    <property type="project" value="UniProtKB-SubCell"/>
</dbReference>
<dbReference type="GO" id="GO:0045296">
    <property type="term" value="F:cadherin binding"/>
    <property type="evidence" value="ECO:0007005"/>
    <property type="project" value="BHF-UCL"/>
</dbReference>
<dbReference type="GO" id="GO:0003677">
    <property type="term" value="F:DNA binding"/>
    <property type="evidence" value="ECO:0000304"/>
    <property type="project" value="ProtInc"/>
</dbReference>
<dbReference type="GO" id="GO:0003723">
    <property type="term" value="F:RNA binding"/>
    <property type="evidence" value="ECO:0007005"/>
    <property type="project" value="UniProtKB"/>
</dbReference>
<dbReference type="GO" id="GO:0003735">
    <property type="term" value="F:structural constituent of ribosome"/>
    <property type="evidence" value="ECO:0000314"/>
    <property type="project" value="UniProtKB"/>
</dbReference>
<dbReference type="GO" id="GO:0002181">
    <property type="term" value="P:cytoplasmic translation"/>
    <property type="evidence" value="ECO:0000314"/>
    <property type="project" value="UniProtKB"/>
</dbReference>
<dbReference type="GO" id="GO:0006355">
    <property type="term" value="P:regulation of DNA-templated transcription"/>
    <property type="evidence" value="ECO:0000304"/>
    <property type="project" value="ProtInc"/>
</dbReference>
<dbReference type="GO" id="GO:0006412">
    <property type="term" value="P:translation"/>
    <property type="evidence" value="ECO:0000304"/>
    <property type="project" value="ProtInc"/>
</dbReference>
<dbReference type="CDD" id="cd13156">
    <property type="entry name" value="KOW_RPL6"/>
    <property type="match status" value="1"/>
</dbReference>
<dbReference type="FunFam" id="2.30.30.30:FF:000020">
    <property type="entry name" value="60S ribosomal protein L6"/>
    <property type="match status" value="1"/>
</dbReference>
<dbReference type="Gene3D" id="2.30.30.30">
    <property type="match status" value="1"/>
</dbReference>
<dbReference type="InterPro" id="IPR000915">
    <property type="entry name" value="60S_ribosomal_eL6"/>
</dbReference>
<dbReference type="InterPro" id="IPR014722">
    <property type="entry name" value="Rib_uL2_dom2"/>
</dbReference>
<dbReference type="InterPro" id="IPR049633">
    <property type="entry name" value="Ribosomal_eL6_CS"/>
</dbReference>
<dbReference type="InterPro" id="IPR041997">
    <property type="entry name" value="Ribosomal_eL6_KOW"/>
</dbReference>
<dbReference type="InterPro" id="IPR005568">
    <property type="entry name" value="Ribosomal_uL6_N"/>
</dbReference>
<dbReference type="InterPro" id="IPR008991">
    <property type="entry name" value="Translation_prot_SH3-like_sf"/>
</dbReference>
<dbReference type="PANTHER" id="PTHR10715">
    <property type="entry name" value="60S RIBOSOMAL PROTEIN L6"/>
    <property type="match status" value="1"/>
</dbReference>
<dbReference type="PANTHER" id="PTHR10715:SF7">
    <property type="entry name" value="LARGE RIBOSOMAL SUBUNIT PROTEIN EL6"/>
    <property type="match status" value="1"/>
</dbReference>
<dbReference type="Pfam" id="PF01159">
    <property type="entry name" value="Ribosomal_L6e"/>
    <property type="match status" value="1"/>
</dbReference>
<dbReference type="Pfam" id="PF03868">
    <property type="entry name" value="Ribosomal_L6e_N"/>
    <property type="match status" value="1"/>
</dbReference>
<dbReference type="SUPFAM" id="SSF50104">
    <property type="entry name" value="Translation proteins SH3-like domain"/>
    <property type="match status" value="1"/>
</dbReference>
<dbReference type="PROSITE" id="PS01170">
    <property type="entry name" value="RIBOSOMAL_L6E"/>
    <property type="match status" value="1"/>
</dbReference>
<name>RL6_HUMAN</name>
<accession>Q02878</accession>
<accession>Q2M3Q3</accession>
<accession>Q8WW97</accession>
<evidence type="ECO:0000250" key="1">
    <source>
        <dbReference type="UniProtKB" id="P47911"/>
    </source>
</evidence>
<evidence type="ECO:0000250" key="2">
    <source>
        <dbReference type="UniProtKB" id="Q2YGT9"/>
    </source>
</evidence>
<evidence type="ECO:0000256" key="3">
    <source>
        <dbReference type="SAM" id="MobiDB-lite"/>
    </source>
</evidence>
<evidence type="ECO:0000269" key="4">
    <source>
    </source>
</evidence>
<evidence type="ECO:0000269" key="5">
    <source>
    </source>
</evidence>
<evidence type="ECO:0000269" key="6">
    <source>
    </source>
</evidence>
<evidence type="ECO:0000269" key="7">
    <source>
    </source>
</evidence>
<evidence type="ECO:0000269" key="8">
    <source>
    </source>
</evidence>
<evidence type="ECO:0000269" key="9">
    <source>
    </source>
</evidence>
<evidence type="ECO:0000269" key="10">
    <source>
    </source>
</evidence>
<evidence type="ECO:0000269" key="11">
    <source>
    </source>
</evidence>
<evidence type="ECO:0000303" key="12">
    <source>
    </source>
</evidence>
<evidence type="ECO:0000305" key="13"/>
<evidence type="ECO:0000305" key="14">
    <source>
    </source>
</evidence>
<evidence type="ECO:0000305" key="15">
    <source>
    </source>
</evidence>
<evidence type="ECO:0000305" key="16">
    <source>
    </source>
</evidence>
<evidence type="ECO:0007744" key="17">
    <source>
        <dbReference type="PDB" id="4UG0"/>
    </source>
</evidence>
<evidence type="ECO:0007744" key="18">
    <source>
        <dbReference type="PDB" id="5AJ0"/>
    </source>
</evidence>
<evidence type="ECO:0007744" key="19">
    <source>
        <dbReference type="PDB" id="6LQM"/>
    </source>
</evidence>
<evidence type="ECO:0007744" key="20">
    <source>
        <dbReference type="PDB" id="6LSR"/>
    </source>
</evidence>
<evidence type="ECO:0007744" key="21">
    <source>
        <dbReference type="PDB" id="6LSS"/>
    </source>
</evidence>
<evidence type="ECO:0007744" key="22">
    <source>
        <dbReference type="PDB" id="6LU8"/>
    </source>
</evidence>
<evidence type="ECO:0007744" key="23">
    <source>
    </source>
</evidence>
<evidence type="ECO:0007744" key="24">
    <source>
    </source>
</evidence>
<evidence type="ECO:0007744" key="25">
    <source>
    </source>
</evidence>
<comment type="function">
    <text evidence="7 8 9 10 14">Component of the large ribosomal subunit (PubMed:12962325, PubMed:23636399, PubMed:25901680, PubMed:25957688, PubMed:32669547). The ribosome is a large ribonucleoprotein complex responsible for the synthesis of proteins in the cell (PubMed:12962325, PubMed:23636399, PubMed:25901680, PubMed:25957688, PubMed:32669547).</text>
</comment>
<comment type="function">
    <text evidence="11">(Microbial infection) Specifically binds to domain C of the Tax-responsive enhancer element in the long terminal repeat of HTLV-I (PubMed:8457378).</text>
</comment>
<comment type="subunit">
    <text evidence="1 7 8 9 10 14">Component of the large ribosomal subunit (PubMed:12962325, PubMed:23636399, PubMed:25901680, PubMed:25957688, PubMed:32669547). May bind IPO9 with low affinity (By similarity).</text>
</comment>
<comment type="interaction">
    <interactant intactId="EBI-359655">
        <id>Q02878</id>
    </interactant>
    <interactant intactId="EBI-358011">
        <id>Q99558</id>
        <label>MAP3K14</label>
    </interactant>
    <organismsDiffer>false</organismsDiffer>
    <experiments>3</experiments>
</comment>
<comment type="subcellular location">
    <subcellularLocation>
        <location evidence="9">Cytoplasm</location>
        <location evidence="9">Cytosol</location>
    </subcellularLocation>
    <subcellularLocation>
        <location evidence="15 16">Cytoplasm</location>
    </subcellularLocation>
    <subcellularLocation>
        <location evidence="2">Rough endoplasmic reticulum</location>
    </subcellularLocation>
    <text evidence="2 9">Detected on cytosolic polysomes (PubMed:25957688). Detected in ribosomes that are associated with the rough endoplasmic reticulum (By similarity).</text>
</comment>
<comment type="similarity">
    <text evidence="13">Belongs to the eukaryotic ribosomal protein eL6 family.</text>
</comment>
<organism>
    <name type="scientific">Homo sapiens</name>
    <name type="common">Human</name>
    <dbReference type="NCBI Taxonomy" id="9606"/>
    <lineage>
        <taxon>Eukaryota</taxon>
        <taxon>Metazoa</taxon>
        <taxon>Chordata</taxon>
        <taxon>Craniata</taxon>
        <taxon>Vertebrata</taxon>
        <taxon>Euteleostomi</taxon>
        <taxon>Mammalia</taxon>
        <taxon>Eutheria</taxon>
        <taxon>Euarchontoglires</taxon>
        <taxon>Primates</taxon>
        <taxon>Haplorrhini</taxon>
        <taxon>Catarrhini</taxon>
        <taxon>Hominidae</taxon>
        <taxon>Homo</taxon>
    </lineage>
</organism>
<sequence>MAGEKVEKPDTKEKKPEAKKVDAGGKVKKGNLKAKKPKKGKPHCSRNPVLVRGIGRYSRSAMYSRKAMYKRKYSAAKSKVEKKKKEKVLATVTKPVGGDKNGGTRVVKLRKMPRYYPTEDVPRKLLSHGKKPFSQHVRKLRASITPGTILIILTGRHRGKRVVFLKQLASGLLLVTGPLVLNRVPLRRTHQKFVIATSTKIDISNVKIPKHLTDAYFKKKKLRKPRHQEGEIFDTEKEKYEITEQRKIDQKAVDSQILPKIKAIPQLQGYLRSVFALTNGIYPHKLVF</sequence>
<reference key="1">
    <citation type="journal article" date="1993" name="Nucleic Acids Res.">
        <title>Sequence of a cDNA encoding human ribosomal protein L26 and of a cDNA probably encoding human ribosomal protein L6.</title>
        <authorList>
            <person name="Zaman G.J.R."/>
        </authorList>
    </citation>
    <scope>NUCLEOTIDE SEQUENCE [MRNA]</scope>
</reference>
<reference key="2">
    <citation type="journal article" date="1993" name="AIDS Res. Hum. Retroviruses">
        <title>Isolation of a cDNA clone encoding DNA-binding protein (TAXREB107) that binds specifically to domain C of the tax-responsive enhancer element in the long terminal repeat of human T-cell leukemia virus type I.</title>
        <authorList>
            <person name="Morita T."/>
            <person name="Sato T."/>
            <person name="Nyunoya H."/>
            <person name="Tsujimoto A."/>
            <person name="Takahara J."/>
            <person name="Irino S."/>
            <person name="Shimotohno K."/>
        </authorList>
    </citation>
    <scope>NUCLEOTIDE SEQUENCE [MRNA]</scope>
    <scope>FUNCTION (MICROBIAL INFECTION)</scope>
</reference>
<reference key="3">
    <citation type="journal article" date="2000" name="J. Hum. Genet.">
        <title>The human ribosomal protein L6 gene in a critical region for Noonan syndrome.</title>
        <authorList>
            <person name="Kenmochi N."/>
            <person name="Yoshihama M."/>
            <person name="Higa S."/>
            <person name="Tanaka T."/>
        </authorList>
    </citation>
    <scope>NUCLEOTIDE SEQUENCE [GENOMIC DNA]</scope>
</reference>
<reference key="4">
    <citation type="journal article" date="2004" name="Genome Res.">
        <title>The status, quality, and expansion of the NIH full-length cDNA project: the Mammalian Gene Collection (MGC).</title>
        <authorList>
            <consortium name="The MGC Project Team"/>
        </authorList>
    </citation>
    <scope>NUCLEOTIDE SEQUENCE [LARGE SCALE MRNA]</scope>
    <scope>VARIANT ARG-227</scope>
    <source>
        <tissue>Brain</tissue>
        <tissue>Liver</tissue>
        <tissue>Lung</tissue>
        <tissue>Placenta</tissue>
    </source>
</reference>
<reference key="5">
    <citation type="journal article" date="1994" name="J. Mol. Endocrinol.">
        <title>Isolation of a cDNA whose expression is markedly increased in malignantly transformed FRTL cells and neoplastic human thyroid tissues.</title>
        <authorList>
            <person name="Ohta K."/>
            <person name="Endo T."/>
            <person name="Gunji K."/>
            <person name="Onaya T."/>
        </authorList>
    </citation>
    <scope>NUCLEOTIDE SEQUENCE [MRNA] OF 46-268</scope>
</reference>
<reference key="6">
    <citation type="journal article" date="2003" name="J. Protein Chem.">
        <title>Characterization and analysis of posttranslational modifications of the human large cytoplasmic ribosomal subunit proteins by mass spectrometry and Edman sequencing.</title>
        <authorList>
            <person name="Odintsova T.I."/>
            <person name="Muller E.C."/>
            <person name="Ivanov A.V."/>
            <person name="Egorov T.A."/>
            <person name="Bienert R."/>
            <person name="Vladimirov S.N."/>
            <person name="Kostka S."/>
            <person name="Otto A."/>
            <person name="Wittmann-Liebold B."/>
            <person name="Karpova G.G."/>
        </authorList>
    </citation>
    <scope>PROTEIN SEQUENCE OF 2-10</scope>
    <scope>IDENTIFICATION BY MASS SPECTROMETRY</scope>
    <scope>FUNCTION</scope>
    <scope>SUBUNIT</scope>
</reference>
<reference key="7">
    <citation type="journal article" date="2002" name="EMBO J.">
        <title>Importins fulfill a dual function as nuclear import receptors and cytoplasmic chaperones for exposed basic domains.</title>
        <authorList>
            <person name="Jaekel S."/>
            <person name="Mingot J.-M."/>
            <person name="Schwarzmaier P."/>
            <person name="Hartmann E."/>
            <person name="Goerlich D."/>
        </authorList>
    </citation>
    <scope>INTERACTION WITH IPO9</scope>
</reference>
<reference key="8">
    <citation type="journal article" date="2003" name="Nature">
        <title>Proteomic characterization of the human centrosome by protein correlation profiling.</title>
        <authorList>
            <person name="Andersen J.S."/>
            <person name="Wilkinson C.J."/>
            <person name="Mayor T."/>
            <person name="Mortensen P."/>
            <person name="Nigg E.A."/>
            <person name="Mann M."/>
        </authorList>
    </citation>
    <scope>IDENTIFICATION BY MASS SPECTROMETRY</scope>
    <source>
        <tissue>Lymphoblast</tissue>
    </source>
</reference>
<reference key="9">
    <citation type="journal article" date="2007" name="J. Proteome Res.">
        <title>Improved titanium dioxide enrichment of phosphopeptides from HeLa cells and high confident phosphopeptide identification by cross-validation of MS/MS and MS/MS/MS spectra.</title>
        <authorList>
            <person name="Yu L.R."/>
            <person name="Zhu Z."/>
            <person name="Chan K.C."/>
            <person name="Issaq H.J."/>
            <person name="Dimitrov D.S."/>
            <person name="Veenstra T.D."/>
        </authorList>
    </citation>
    <scope>PHOSPHORYLATION [LARGE SCALE ANALYSIS] AT SER-127</scope>
    <scope>IDENTIFICATION BY MASS SPECTROMETRY [LARGE SCALE ANALYSIS]</scope>
    <source>
        <tissue>Cervix carcinoma</tissue>
    </source>
</reference>
<reference key="10">
    <citation type="journal article" date="2009" name="Science">
        <title>Lysine acetylation targets protein complexes and co-regulates major cellular functions.</title>
        <authorList>
            <person name="Choudhary C."/>
            <person name="Kumar C."/>
            <person name="Gnad F."/>
            <person name="Nielsen M.L."/>
            <person name="Rehman M."/>
            <person name="Walther T.C."/>
            <person name="Olsen J.V."/>
            <person name="Mann M."/>
        </authorList>
    </citation>
    <scope>ACETYLATION [LARGE SCALE ANALYSIS] AT LYS-239</scope>
    <scope>IDENTIFICATION BY MASS SPECTROMETRY [LARGE SCALE ANALYSIS]</scope>
</reference>
<reference key="11">
    <citation type="journal article" date="2011" name="BMC Syst. Biol.">
        <title>Initial characterization of the human central proteome.</title>
        <authorList>
            <person name="Burkard T.R."/>
            <person name="Planyavsky M."/>
            <person name="Kaupe I."/>
            <person name="Breitwieser F.P."/>
            <person name="Buerckstuemmer T."/>
            <person name="Bennett K.L."/>
            <person name="Superti-Furga G."/>
            <person name="Colinge J."/>
        </authorList>
    </citation>
    <scope>IDENTIFICATION BY MASS SPECTROMETRY [LARGE SCALE ANALYSIS]</scope>
</reference>
<reference key="12">
    <citation type="journal article" date="2014" name="Curr. Opin. Struct. Biol.">
        <title>A new system for naming ribosomal proteins.</title>
        <authorList>
            <person name="Ban N."/>
            <person name="Beckmann R."/>
            <person name="Cate J.H.D."/>
            <person name="Dinman J.D."/>
            <person name="Dragon F."/>
            <person name="Ellis S.R."/>
            <person name="Lafontaine D.L.J."/>
            <person name="Lindahl L."/>
            <person name="Liljas A."/>
            <person name="Lipton J.M."/>
            <person name="McAlear M.A."/>
            <person name="Moore P.B."/>
            <person name="Noller H.F."/>
            <person name="Ortega J."/>
            <person name="Panse V.G."/>
            <person name="Ramakrishnan V."/>
            <person name="Spahn C.M.T."/>
            <person name="Steitz T.A."/>
            <person name="Tchorzewski M."/>
            <person name="Tollervey D."/>
            <person name="Warren A.J."/>
            <person name="Williamson J.R."/>
            <person name="Wilson D."/>
            <person name="Yonath A."/>
            <person name="Yusupov M."/>
        </authorList>
    </citation>
    <scope>NOMENCLATURE</scope>
</reference>
<reference key="13">
    <citation type="journal article" date="2015" name="Proteomics">
        <title>N-terminome analysis of the human mitochondrial proteome.</title>
        <authorList>
            <person name="Vaca Jacome A.S."/>
            <person name="Rabilloud T."/>
            <person name="Schaeffer-Reiss C."/>
            <person name="Rompais M."/>
            <person name="Ayoub D."/>
            <person name="Lane L."/>
            <person name="Bairoch A."/>
            <person name="Van Dorsselaer A."/>
            <person name="Carapito C."/>
        </authorList>
    </citation>
    <scope>IDENTIFICATION BY MASS SPECTROMETRY [LARGE SCALE ANALYSIS]</scope>
</reference>
<reference key="14">
    <citation type="journal article" date="2017" name="Nat. Struct. Mol. Biol.">
        <title>Site-specific mapping of the human SUMO proteome reveals co-modification with phosphorylation.</title>
        <authorList>
            <person name="Hendriks I.A."/>
            <person name="Lyon D."/>
            <person name="Young C."/>
            <person name="Jensen L.J."/>
            <person name="Vertegaal A.C."/>
            <person name="Nielsen M.L."/>
        </authorList>
    </citation>
    <scope>SUMOYLATION [LARGE SCALE ANALYSIS] AT LYS-5</scope>
    <scope>IDENTIFICATION BY MASS SPECTROMETRY [LARGE SCALE ANALYSIS]</scope>
</reference>
<reference key="15">
    <citation type="journal article" date="2013" name="Nature">
        <title>Structures of the human and Drosophila 80S ribosome.</title>
        <authorList>
            <person name="Anger A.M."/>
            <person name="Armache J.P."/>
            <person name="Berninghausen O."/>
            <person name="Habeck M."/>
            <person name="Subklewe M."/>
            <person name="Wilson D.N."/>
            <person name="Beckmann R."/>
        </authorList>
    </citation>
    <scope>STRUCTURE BY ELECTRON MICROSCOPY (5.0 ANGSTROMS) IN COMPLEX WITH THE 80S RIBOSOME</scope>
    <scope>SUBUNIT</scope>
    <scope>SUBCELLULAR LOCATION</scope>
    <scope>FUNCTION</scope>
</reference>
<reference evidence="18" key="16">
    <citation type="journal article" date="2015" name="Cell">
        <title>Structural snapshots of actively translating human ribosomes.</title>
        <authorList>
            <person name="Behrmann E."/>
            <person name="Loerke J."/>
            <person name="Budkevich T.V."/>
            <person name="Yamamoto K."/>
            <person name="Schmidt A."/>
            <person name="Penczek P.A."/>
            <person name="Vos M.R."/>
            <person name="Burger J."/>
            <person name="Mielke T."/>
            <person name="Scheerer P."/>
            <person name="Spahn C.M."/>
        </authorList>
    </citation>
    <scope>STRUCTURE BY ELECTRON MICROSCOPY (3.50 ANGSTROMS)</scope>
    <scope>SUBCELLULAR LOCATION</scope>
    <scope>SUBUNIT</scope>
    <scope>FUNCTION</scope>
</reference>
<reference evidence="17" key="17">
    <citation type="journal article" date="2015" name="Nature">
        <title>Structure of the human 80S ribosome.</title>
        <authorList>
            <person name="Khatter H."/>
            <person name="Myasnikov A.G."/>
            <person name="Natchiar S.K."/>
            <person name="Klaholz B.P."/>
        </authorList>
    </citation>
    <scope>STRUCTURE BY ELECTRON MICROSCOPY (3.60 ANGSTROMS)</scope>
    <scope>SUBUNIT</scope>
    <scope>SUBCELLULAR LOCATION</scope>
    <scope>FUNCTION</scope>
</reference>
<reference evidence="19 20 21 22" key="18">
    <citation type="journal article" date="2020" name="Nat. Commun.">
        <title>Structural snapshots of human pre-60S ribosomal particles before and after nuclear export.</title>
        <authorList>
            <person name="Liang X."/>
            <person name="Zuo M.Q."/>
            <person name="Zhang Y."/>
            <person name="Li N."/>
            <person name="Ma C."/>
            <person name="Dong M.Q."/>
            <person name="Gao N."/>
        </authorList>
    </citation>
    <scope>STRUCTURE BY ELECTRON MICROSCOPY (3.09 ANGSTROMS)</scope>
    <scope>FUNCTION</scope>
    <scope>SUBUNIT</scope>
</reference>
<reference key="19">
    <citation type="journal article" date="2006" name="Science">
        <title>The consensus coding sequences of human breast and colorectal cancers.</title>
        <authorList>
            <person name="Sjoeblom T."/>
            <person name="Jones S."/>
            <person name="Wood L.D."/>
            <person name="Parsons D.W."/>
            <person name="Lin J."/>
            <person name="Barber T.D."/>
            <person name="Mandelker D."/>
            <person name="Leary R.J."/>
            <person name="Ptak J."/>
            <person name="Silliman N."/>
            <person name="Szabo S."/>
            <person name="Buckhaults P."/>
            <person name="Farrell C."/>
            <person name="Meeh P."/>
            <person name="Markowitz S.D."/>
            <person name="Willis J."/>
            <person name="Dawson D."/>
            <person name="Willson J.K.V."/>
            <person name="Gazdar A.F."/>
            <person name="Hartigan J."/>
            <person name="Wu L."/>
            <person name="Liu C."/>
            <person name="Parmigiani G."/>
            <person name="Park B.H."/>
            <person name="Bachman K.E."/>
            <person name="Papadopoulos N."/>
            <person name="Vogelstein B."/>
            <person name="Kinzler K.W."/>
            <person name="Velculescu V.E."/>
        </authorList>
    </citation>
    <scope>VARIANT [LARGE SCALE ANALYSIS] GLN-100</scope>
</reference>
<gene>
    <name type="primary">RPL6</name>
    <name type="synonym">TXREB1</name>
</gene>
<feature type="initiator methionine" description="Removed" evidence="4">
    <location>
        <position position="1"/>
    </location>
</feature>
<feature type="chain" id="PRO_0000171009" description="Large ribosomal subunit protein eL6">
    <location>
        <begin position="2"/>
        <end position="288"/>
    </location>
</feature>
<feature type="region of interest" description="Disordered" evidence="3">
    <location>
        <begin position="1"/>
        <end position="48"/>
    </location>
</feature>
<feature type="compositionally biased region" description="Basic and acidic residues" evidence="3">
    <location>
        <begin position="1"/>
        <end position="25"/>
    </location>
</feature>
<feature type="compositionally biased region" description="Basic residues" evidence="3">
    <location>
        <begin position="26"/>
        <end position="44"/>
    </location>
</feature>
<feature type="modified residue" description="N6-succinyllysine" evidence="1">
    <location>
        <position position="94"/>
    </location>
</feature>
<feature type="modified residue" description="Phosphoserine" evidence="23">
    <location>
        <position position="127"/>
    </location>
</feature>
<feature type="modified residue" description="N6-succinyllysine" evidence="1">
    <location>
        <position position="207"/>
    </location>
</feature>
<feature type="modified residue" description="N6-acetyllysine" evidence="24">
    <location>
        <position position="239"/>
    </location>
</feature>
<feature type="cross-link" description="Glycyl lysine isopeptide (Lys-Gly) (interchain with G-Cter in SUMO2)" evidence="25">
    <location>
        <position position="5"/>
    </location>
</feature>
<feature type="sequence variant" id="VAR_036437" description="In a colorectal cancer sample; somatic mutation." evidence="6">
    <original>K</original>
    <variation>Q</variation>
    <location>
        <position position="100"/>
    </location>
</feature>
<feature type="sequence variant" id="VAR_025313" description="In dbSNP:rs17851813." evidence="5">
    <original>H</original>
    <variation>R</variation>
    <location>
        <position position="227"/>
    </location>
</feature>
<feature type="sequence variant" id="VAR_051810" description="In dbSNP:rs16942044.">
    <original>K</original>
    <variation>E</variation>
    <location>
        <position position="237"/>
    </location>
</feature>
<feature type="sequence conflict" description="In Ref. 1; CAA49188." evidence="13" ref="1">
    <original>HCSRNPVLVRGIGRYSRSAMY</original>
    <variation>PLQPQPCPSQRNWQVFPICHV</variation>
    <location>
        <begin position="43"/>
        <end position="63"/>
    </location>
</feature>
<feature type="sequence conflict" description="In Ref. 1; CAA49188." evidence="13" ref="1">
    <original>GPLVLNR</original>
    <variation>DLWSSIE</variation>
    <location>
        <begin position="177"/>
        <end position="183"/>
    </location>
</feature>
<feature type="sequence conflict" description="In Ref. 5; AAB30819." evidence="13" ref="5">
    <original>LNRVPLRRTHQKFVIATSTKIDISN</original>
    <variation>SIEFLYEEHTRNLSLPLQPKSISAI</variation>
    <location>
        <begin position="181"/>
        <end position="205"/>
    </location>
</feature>
<feature type="sequence conflict" description="In Ref. 1; CAA49188." evidence="13" ref="1">
    <original>AVDSQILPKIKAIPQLQ</original>
    <variation>LWTHKFYQKSKLFLSSS</variation>
    <location>
        <begin position="252"/>
        <end position="268"/>
    </location>
</feature>
<keyword id="KW-0002">3D-structure</keyword>
<keyword id="KW-0007">Acetylation</keyword>
<keyword id="KW-0963">Cytoplasm</keyword>
<keyword id="KW-0903">Direct protein sequencing</keyword>
<keyword id="KW-0256">Endoplasmic reticulum</keyword>
<keyword id="KW-1017">Isopeptide bond</keyword>
<keyword id="KW-0597">Phosphoprotein</keyword>
<keyword id="KW-1267">Proteomics identification</keyword>
<keyword id="KW-1185">Reference proteome</keyword>
<keyword id="KW-0687">Ribonucleoprotein</keyword>
<keyword id="KW-0689">Ribosomal protein</keyword>
<keyword id="KW-0832">Ubl conjugation</keyword>
<proteinExistence type="evidence at protein level"/>